<evidence type="ECO:0000255" key="1">
    <source>
        <dbReference type="HAMAP-Rule" id="MF_01026"/>
    </source>
</evidence>
<sequence length="469" mass="50843">MKKTLYQKLFDSHIVHEAPGEVPILYINRHLIHEVTSPQAFDGLRVAGRQVRQVNKTFGTMDHSISTQVRDVNKLTGQAKIQVLELDKNCKATGISLFDMNSKQQGIVHVMGPEQGLTLPGMTIVCGDSHTATHGAFGALAFGIGTSEVEHVLATQTLKQARAKSMKIEVRGEVAKGITAKDIILAIIGKTTMAGGTGHVVEFCGEAIRALSMEGRMTVCNMAIEMGAKAGLIAPDETTFAYLKDRPYAPKGKDWESAVEYWKTLKTDEGAEFDTVVILDAKDIAPQVTWGTNPGQVIGIDQKVPNPAEMQDPVTKASAEKALAYIGLSPETDLKDISVDQVFIGSCTNSRIEDLRAAATVMKGRKKADNVKRVLVVPGSGLVKEQAEKEGLDKIFIAAGAEWRNPGCSMCLGMNDDRLGEWERCASTSNRNFEGRQGRNGRTHLVSPAMAAAAAVFGKFVDIRYMELN</sequence>
<reference key="1">
    <citation type="submission" date="2008-02" db="EMBL/GenBank/DDBJ databases">
        <title>Complete sequence of Haemophilus somnus 2336.</title>
        <authorList>
            <consortium name="US DOE Joint Genome Institute"/>
            <person name="Siddaramappa S."/>
            <person name="Duncan A.J."/>
            <person name="Challacombe J.F."/>
            <person name="Rainey D."/>
            <person name="Gillaspy A.F."/>
            <person name="Carson M."/>
            <person name="Gipson J."/>
            <person name="Gipson M."/>
            <person name="Bruce D."/>
            <person name="Detter J.C."/>
            <person name="Han C.S."/>
            <person name="Land M."/>
            <person name="Tapia R."/>
            <person name="Thompson L.S."/>
            <person name="Orvis J."/>
            <person name="Zaitshik J."/>
            <person name="Barnes G."/>
            <person name="Brettin T.S."/>
            <person name="Dyer D.W."/>
            <person name="Inzana T.J."/>
        </authorList>
    </citation>
    <scope>NUCLEOTIDE SEQUENCE [LARGE SCALE GENOMIC DNA]</scope>
    <source>
        <strain>2336</strain>
    </source>
</reference>
<accession>B0USF4</accession>
<gene>
    <name evidence="1" type="primary">leuC</name>
    <name type="ordered locus">HSM_0715</name>
</gene>
<protein>
    <recommendedName>
        <fullName evidence="1">3-isopropylmalate dehydratase large subunit</fullName>
        <ecNumber evidence="1">4.2.1.33</ecNumber>
    </recommendedName>
    <alternativeName>
        <fullName evidence="1">Alpha-IPM isomerase</fullName>
        <shortName evidence="1">IPMI</shortName>
    </alternativeName>
    <alternativeName>
        <fullName evidence="1">Isopropylmalate isomerase</fullName>
    </alternativeName>
</protein>
<name>LEUC_HISS2</name>
<organism>
    <name type="scientific">Histophilus somni (strain 2336)</name>
    <name type="common">Haemophilus somnus</name>
    <dbReference type="NCBI Taxonomy" id="228400"/>
    <lineage>
        <taxon>Bacteria</taxon>
        <taxon>Pseudomonadati</taxon>
        <taxon>Pseudomonadota</taxon>
        <taxon>Gammaproteobacteria</taxon>
        <taxon>Pasteurellales</taxon>
        <taxon>Pasteurellaceae</taxon>
        <taxon>Histophilus</taxon>
    </lineage>
</organism>
<dbReference type="EC" id="4.2.1.33" evidence="1"/>
<dbReference type="EMBL" id="CP000947">
    <property type="protein sequence ID" value="ACA32380.1"/>
    <property type="molecule type" value="Genomic_DNA"/>
</dbReference>
<dbReference type="RefSeq" id="WP_011608546.1">
    <property type="nucleotide sequence ID" value="NC_010519.1"/>
</dbReference>
<dbReference type="SMR" id="B0USF4"/>
<dbReference type="STRING" id="228400.HSM_0715"/>
<dbReference type="GeneID" id="31487001"/>
<dbReference type="KEGG" id="hsm:HSM_0715"/>
<dbReference type="HOGENOM" id="CLU_006714_3_4_6"/>
<dbReference type="UniPathway" id="UPA00048">
    <property type="reaction ID" value="UER00071"/>
</dbReference>
<dbReference type="GO" id="GO:0003861">
    <property type="term" value="F:3-isopropylmalate dehydratase activity"/>
    <property type="evidence" value="ECO:0007669"/>
    <property type="project" value="UniProtKB-UniRule"/>
</dbReference>
<dbReference type="GO" id="GO:0051539">
    <property type="term" value="F:4 iron, 4 sulfur cluster binding"/>
    <property type="evidence" value="ECO:0007669"/>
    <property type="project" value="UniProtKB-KW"/>
</dbReference>
<dbReference type="GO" id="GO:0046872">
    <property type="term" value="F:metal ion binding"/>
    <property type="evidence" value="ECO:0007669"/>
    <property type="project" value="UniProtKB-KW"/>
</dbReference>
<dbReference type="GO" id="GO:0009098">
    <property type="term" value="P:L-leucine biosynthetic process"/>
    <property type="evidence" value="ECO:0007669"/>
    <property type="project" value="UniProtKB-UniRule"/>
</dbReference>
<dbReference type="CDD" id="cd01583">
    <property type="entry name" value="IPMI"/>
    <property type="match status" value="1"/>
</dbReference>
<dbReference type="FunFam" id="3.30.499.10:FF:000006">
    <property type="entry name" value="3-isopropylmalate dehydratase large subunit"/>
    <property type="match status" value="1"/>
</dbReference>
<dbReference type="FunFam" id="3.30.499.10:FF:000007">
    <property type="entry name" value="3-isopropylmalate dehydratase large subunit"/>
    <property type="match status" value="1"/>
</dbReference>
<dbReference type="Gene3D" id="3.30.499.10">
    <property type="entry name" value="Aconitase, domain 3"/>
    <property type="match status" value="2"/>
</dbReference>
<dbReference type="HAMAP" id="MF_01026">
    <property type="entry name" value="LeuC_type1"/>
    <property type="match status" value="1"/>
</dbReference>
<dbReference type="InterPro" id="IPR004430">
    <property type="entry name" value="3-IsopropMal_deHydase_lsu"/>
</dbReference>
<dbReference type="InterPro" id="IPR015931">
    <property type="entry name" value="Acnase/IPM_dHydase_lsu_aba_1/3"/>
</dbReference>
<dbReference type="InterPro" id="IPR001030">
    <property type="entry name" value="Acoase/IPM_deHydtase_lsu_aba"/>
</dbReference>
<dbReference type="InterPro" id="IPR018136">
    <property type="entry name" value="Aconitase_4Fe-4S_BS"/>
</dbReference>
<dbReference type="InterPro" id="IPR036008">
    <property type="entry name" value="Aconitase_4Fe-4S_dom"/>
</dbReference>
<dbReference type="InterPro" id="IPR050067">
    <property type="entry name" value="IPM_dehydratase_rel_enz"/>
</dbReference>
<dbReference type="InterPro" id="IPR033941">
    <property type="entry name" value="IPMI_cat"/>
</dbReference>
<dbReference type="NCBIfam" id="TIGR00170">
    <property type="entry name" value="leuC"/>
    <property type="match status" value="1"/>
</dbReference>
<dbReference type="NCBIfam" id="NF004016">
    <property type="entry name" value="PRK05478.1"/>
    <property type="match status" value="1"/>
</dbReference>
<dbReference type="NCBIfam" id="NF009116">
    <property type="entry name" value="PRK12466.1"/>
    <property type="match status" value="1"/>
</dbReference>
<dbReference type="PANTHER" id="PTHR43822:SF9">
    <property type="entry name" value="3-ISOPROPYLMALATE DEHYDRATASE"/>
    <property type="match status" value="1"/>
</dbReference>
<dbReference type="PANTHER" id="PTHR43822">
    <property type="entry name" value="HOMOACONITASE, MITOCHONDRIAL-RELATED"/>
    <property type="match status" value="1"/>
</dbReference>
<dbReference type="Pfam" id="PF00330">
    <property type="entry name" value="Aconitase"/>
    <property type="match status" value="1"/>
</dbReference>
<dbReference type="PRINTS" id="PR00415">
    <property type="entry name" value="ACONITASE"/>
</dbReference>
<dbReference type="SUPFAM" id="SSF53732">
    <property type="entry name" value="Aconitase iron-sulfur domain"/>
    <property type="match status" value="1"/>
</dbReference>
<dbReference type="PROSITE" id="PS00450">
    <property type="entry name" value="ACONITASE_1"/>
    <property type="match status" value="1"/>
</dbReference>
<dbReference type="PROSITE" id="PS01244">
    <property type="entry name" value="ACONITASE_2"/>
    <property type="match status" value="1"/>
</dbReference>
<keyword id="KW-0004">4Fe-4S</keyword>
<keyword id="KW-0028">Amino-acid biosynthesis</keyword>
<keyword id="KW-0100">Branched-chain amino acid biosynthesis</keyword>
<keyword id="KW-0408">Iron</keyword>
<keyword id="KW-0411">Iron-sulfur</keyword>
<keyword id="KW-0432">Leucine biosynthesis</keyword>
<keyword id="KW-0456">Lyase</keyword>
<keyword id="KW-0479">Metal-binding</keyword>
<comment type="function">
    <text evidence="1">Catalyzes the isomerization between 2-isopropylmalate and 3-isopropylmalate, via the formation of 2-isopropylmaleate.</text>
</comment>
<comment type="catalytic activity">
    <reaction evidence="1">
        <text>(2R,3S)-3-isopropylmalate = (2S)-2-isopropylmalate</text>
        <dbReference type="Rhea" id="RHEA:32287"/>
        <dbReference type="ChEBI" id="CHEBI:1178"/>
        <dbReference type="ChEBI" id="CHEBI:35121"/>
        <dbReference type="EC" id="4.2.1.33"/>
    </reaction>
</comment>
<comment type="cofactor">
    <cofactor evidence="1">
        <name>[4Fe-4S] cluster</name>
        <dbReference type="ChEBI" id="CHEBI:49883"/>
    </cofactor>
    <text evidence="1">Binds 1 [4Fe-4S] cluster per subunit.</text>
</comment>
<comment type="pathway">
    <text evidence="1">Amino-acid biosynthesis; L-leucine biosynthesis; L-leucine from 3-methyl-2-oxobutanoate: step 2/4.</text>
</comment>
<comment type="subunit">
    <text evidence="1">Heterodimer of LeuC and LeuD.</text>
</comment>
<comment type="similarity">
    <text evidence="1">Belongs to the aconitase/IPM isomerase family. LeuC type 1 subfamily.</text>
</comment>
<proteinExistence type="inferred from homology"/>
<feature type="chain" id="PRO_1000084214" description="3-isopropylmalate dehydratase large subunit">
    <location>
        <begin position="1"/>
        <end position="469"/>
    </location>
</feature>
<feature type="binding site" evidence="1">
    <location>
        <position position="347"/>
    </location>
    <ligand>
        <name>[4Fe-4S] cluster</name>
        <dbReference type="ChEBI" id="CHEBI:49883"/>
    </ligand>
</feature>
<feature type="binding site" evidence="1">
    <location>
        <position position="408"/>
    </location>
    <ligand>
        <name>[4Fe-4S] cluster</name>
        <dbReference type="ChEBI" id="CHEBI:49883"/>
    </ligand>
</feature>
<feature type="binding site" evidence="1">
    <location>
        <position position="411"/>
    </location>
    <ligand>
        <name>[4Fe-4S] cluster</name>
        <dbReference type="ChEBI" id="CHEBI:49883"/>
    </ligand>
</feature>